<dbReference type="EMBL" id="CP000764">
    <property type="protein sequence ID" value="ABS23266.1"/>
    <property type="molecule type" value="Genomic_DNA"/>
</dbReference>
<dbReference type="RefSeq" id="WP_012095503.1">
    <property type="nucleotide sequence ID" value="NC_009674.1"/>
</dbReference>
<dbReference type="SMR" id="A7GT08"/>
<dbReference type="STRING" id="315749.Bcer98_3040"/>
<dbReference type="GeneID" id="33898286"/>
<dbReference type="KEGG" id="bcy:Bcer98_3040"/>
<dbReference type="eggNOG" id="COG0443">
    <property type="taxonomic scope" value="Bacteria"/>
</dbReference>
<dbReference type="HOGENOM" id="CLU_005965_2_4_9"/>
<dbReference type="OrthoDB" id="9766019at2"/>
<dbReference type="Proteomes" id="UP000002300">
    <property type="component" value="Chromosome"/>
</dbReference>
<dbReference type="GO" id="GO:0005524">
    <property type="term" value="F:ATP binding"/>
    <property type="evidence" value="ECO:0007669"/>
    <property type="project" value="UniProtKB-UniRule"/>
</dbReference>
<dbReference type="GO" id="GO:0140662">
    <property type="term" value="F:ATP-dependent protein folding chaperone"/>
    <property type="evidence" value="ECO:0007669"/>
    <property type="project" value="InterPro"/>
</dbReference>
<dbReference type="GO" id="GO:0051082">
    <property type="term" value="F:unfolded protein binding"/>
    <property type="evidence" value="ECO:0007669"/>
    <property type="project" value="InterPro"/>
</dbReference>
<dbReference type="CDD" id="cd10234">
    <property type="entry name" value="ASKHA_NBD_HSP70_DnaK-like"/>
    <property type="match status" value="1"/>
</dbReference>
<dbReference type="FunFam" id="2.60.34.10:FF:000014">
    <property type="entry name" value="Chaperone protein DnaK HSP70"/>
    <property type="match status" value="1"/>
</dbReference>
<dbReference type="FunFam" id="1.20.1270.10:FF:000004">
    <property type="entry name" value="Molecular chaperone DnaK"/>
    <property type="match status" value="1"/>
</dbReference>
<dbReference type="FunFam" id="3.30.420.40:FF:000071">
    <property type="entry name" value="Molecular chaperone DnaK"/>
    <property type="match status" value="1"/>
</dbReference>
<dbReference type="FunFam" id="3.90.640.10:FF:000003">
    <property type="entry name" value="Molecular chaperone DnaK"/>
    <property type="match status" value="1"/>
</dbReference>
<dbReference type="Gene3D" id="1.20.1270.10">
    <property type="match status" value="1"/>
</dbReference>
<dbReference type="Gene3D" id="3.30.420.40">
    <property type="match status" value="2"/>
</dbReference>
<dbReference type="Gene3D" id="3.90.640.10">
    <property type="entry name" value="Actin, Chain A, domain 4"/>
    <property type="match status" value="1"/>
</dbReference>
<dbReference type="Gene3D" id="2.60.34.10">
    <property type="entry name" value="Substrate Binding Domain Of DNAk, Chain A, domain 1"/>
    <property type="match status" value="1"/>
</dbReference>
<dbReference type="HAMAP" id="MF_00332">
    <property type="entry name" value="DnaK"/>
    <property type="match status" value="1"/>
</dbReference>
<dbReference type="InterPro" id="IPR043129">
    <property type="entry name" value="ATPase_NBD"/>
</dbReference>
<dbReference type="InterPro" id="IPR012725">
    <property type="entry name" value="Chaperone_DnaK"/>
</dbReference>
<dbReference type="InterPro" id="IPR018181">
    <property type="entry name" value="Heat_shock_70_CS"/>
</dbReference>
<dbReference type="InterPro" id="IPR029048">
    <property type="entry name" value="HSP70_C_sf"/>
</dbReference>
<dbReference type="InterPro" id="IPR029047">
    <property type="entry name" value="HSP70_peptide-bd_sf"/>
</dbReference>
<dbReference type="InterPro" id="IPR013126">
    <property type="entry name" value="Hsp_70_fam"/>
</dbReference>
<dbReference type="NCBIfam" id="NF001413">
    <property type="entry name" value="PRK00290.1"/>
    <property type="match status" value="1"/>
</dbReference>
<dbReference type="NCBIfam" id="TIGR02350">
    <property type="entry name" value="prok_dnaK"/>
    <property type="match status" value="1"/>
</dbReference>
<dbReference type="PANTHER" id="PTHR19375">
    <property type="entry name" value="HEAT SHOCK PROTEIN 70KDA"/>
    <property type="match status" value="1"/>
</dbReference>
<dbReference type="Pfam" id="PF00012">
    <property type="entry name" value="HSP70"/>
    <property type="match status" value="1"/>
</dbReference>
<dbReference type="PRINTS" id="PR00301">
    <property type="entry name" value="HEATSHOCK70"/>
</dbReference>
<dbReference type="SUPFAM" id="SSF53067">
    <property type="entry name" value="Actin-like ATPase domain"/>
    <property type="match status" value="2"/>
</dbReference>
<dbReference type="SUPFAM" id="SSF100934">
    <property type="entry name" value="Heat shock protein 70kD (HSP70), C-terminal subdomain"/>
    <property type="match status" value="1"/>
</dbReference>
<dbReference type="SUPFAM" id="SSF100920">
    <property type="entry name" value="Heat shock protein 70kD (HSP70), peptide-binding domain"/>
    <property type="match status" value="1"/>
</dbReference>
<dbReference type="PROSITE" id="PS00297">
    <property type="entry name" value="HSP70_1"/>
    <property type="match status" value="1"/>
</dbReference>
<dbReference type="PROSITE" id="PS00329">
    <property type="entry name" value="HSP70_2"/>
    <property type="match status" value="1"/>
</dbReference>
<dbReference type="PROSITE" id="PS01036">
    <property type="entry name" value="HSP70_3"/>
    <property type="match status" value="1"/>
</dbReference>
<reference key="1">
    <citation type="journal article" date="2008" name="Chem. Biol. Interact.">
        <title>Extending the Bacillus cereus group genomics to putative food-borne pathogens of different toxicity.</title>
        <authorList>
            <person name="Lapidus A."/>
            <person name="Goltsman E."/>
            <person name="Auger S."/>
            <person name="Galleron N."/>
            <person name="Segurens B."/>
            <person name="Dossat C."/>
            <person name="Land M.L."/>
            <person name="Broussolle V."/>
            <person name="Brillard J."/>
            <person name="Guinebretiere M.-H."/>
            <person name="Sanchis V."/>
            <person name="Nguen-the C."/>
            <person name="Lereclus D."/>
            <person name="Richardson P."/>
            <person name="Wincker P."/>
            <person name="Weissenbach J."/>
            <person name="Ehrlich S.D."/>
            <person name="Sorokin A."/>
        </authorList>
    </citation>
    <scope>NUCLEOTIDE SEQUENCE [LARGE SCALE GENOMIC DNA]</scope>
    <source>
        <strain>DSM 22905 / CIP 110041 / 391-98 / NVH 391-98</strain>
    </source>
</reference>
<accession>A7GT08</accession>
<comment type="function">
    <text evidence="1">Acts as a chaperone.</text>
</comment>
<comment type="induction">
    <text evidence="1">By stress conditions e.g. heat shock.</text>
</comment>
<comment type="similarity">
    <text evidence="1">Belongs to the heat shock protein 70 family.</text>
</comment>
<keyword id="KW-0067">ATP-binding</keyword>
<keyword id="KW-0143">Chaperone</keyword>
<keyword id="KW-0547">Nucleotide-binding</keyword>
<keyword id="KW-0597">Phosphoprotein</keyword>
<keyword id="KW-0346">Stress response</keyword>
<sequence>MSKIIGIDLGTTNSCVAVMEGGEPKVIPNPEGNRTTPSVVAFKNDERQVGEVAKRQAITNPNTIMSIKRHMGTDYKVEIEGKKYTPQEISAIILQNLKASAEAYLGEPVTKAVITVPAYFNDAERQATKDAGRIAGLEVERIINEPTAAALAYGLEKQDEEQKILVYDLGGGTFDVSILELADGTFEVISTAGDNRLGGDDFDQVIIDYLVAEFKKENNIDLSQDKMALQRLKDAAEKAKKDLSGVTQTQISLPFISAGAAGPLHLELNLTRAKFEELSANLVERTLEPTRRALKDAGLSASDLDKVILVGGSTRIPAVQEAIKRETGKEPYKGVNPDEVVALGAAVQGGVLTGDVEGVLLLDVTPLSLGIETMGGVFTKLIERNTTIPTSKSQVFSTAADNQPAVDIHVLQGERPMAADNKTLGRFQLTDIPPAPRGIPQIEVTFDIDANGIVNVRAKDLGTNKEQAITIQSSSGLSDEEVERMVKEAEANADADQKRKEEVELRNEADQLVFQTDKVVKDLEGKVDAAEVAKATEAKDALKAAIEKNDLDEIRAKKDALQEIVQQLTVKLYEQAQAAAGAQQAEGAQGNAGAKNDNVVDAEFEEVKEDK</sequence>
<feature type="chain" id="PRO_1000079215" description="Chaperone protein DnaK">
    <location>
        <begin position="1"/>
        <end position="611"/>
    </location>
</feature>
<feature type="region of interest" description="Disordered" evidence="2">
    <location>
        <begin position="581"/>
        <end position="611"/>
    </location>
</feature>
<feature type="compositionally biased region" description="Low complexity" evidence="2">
    <location>
        <begin position="581"/>
        <end position="594"/>
    </location>
</feature>
<feature type="compositionally biased region" description="Acidic residues" evidence="2">
    <location>
        <begin position="600"/>
        <end position="611"/>
    </location>
</feature>
<feature type="modified residue" description="Phosphothreonine; by autocatalysis" evidence="1">
    <location>
        <position position="173"/>
    </location>
</feature>
<protein>
    <recommendedName>
        <fullName evidence="1">Chaperone protein DnaK</fullName>
    </recommendedName>
    <alternativeName>
        <fullName evidence="1">HSP70</fullName>
    </alternativeName>
    <alternativeName>
        <fullName evidence="1">Heat shock 70 kDa protein</fullName>
    </alternativeName>
    <alternativeName>
        <fullName evidence="1">Heat shock protein 70</fullName>
    </alternativeName>
</protein>
<organism>
    <name type="scientific">Bacillus cytotoxicus (strain DSM 22905 / CIP 110041 / 391-98 / NVH 391-98)</name>
    <dbReference type="NCBI Taxonomy" id="315749"/>
    <lineage>
        <taxon>Bacteria</taxon>
        <taxon>Bacillati</taxon>
        <taxon>Bacillota</taxon>
        <taxon>Bacilli</taxon>
        <taxon>Bacillales</taxon>
        <taxon>Bacillaceae</taxon>
        <taxon>Bacillus</taxon>
        <taxon>Bacillus cereus group</taxon>
    </lineage>
</organism>
<gene>
    <name evidence="1" type="primary">dnaK</name>
    <name type="ordered locus">Bcer98_3040</name>
</gene>
<evidence type="ECO:0000255" key="1">
    <source>
        <dbReference type="HAMAP-Rule" id="MF_00332"/>
    </source>
</evidence>
<evidence type="ECO:0000256" key="2">
    <source>
        <dbReference type="SAM" id="MobiDB-lite"/>
    </source>
</evidence>
<proteinExistence type="inferred from homology"/>
<name>DNAK_BACCN</name>